<keyword id="KW-0067">ATP-binding</keyword>
<keyword id="KW-0131">Cell cycle</keyword>
<keyword id="KW-0132">Cell division</keyword>
<keyword id="KW-0133">Cell shape</keyword>
<keyword id="KW-0961">Cell wall biogenesis/degradation</keyword>
<keyword id="KW-0963">Cytoplasm</keyword>
<keyword id="KW-0436">Ligase</keyword>
<keyword id="KW-0547">Nucleotide-binding</keyword>
<keyword id="KW-0573">Peptidoglycan synthesis</keyword>
<organism>
    <name type="scientific">Burkholderia pseudomallei (strain 668)</name>
    <dbReference type="NCBI Taxonomy" id="320373"/>
    <lineage>
        <taxon>Bacteria</taxon>
        <taxon>Pseudomonadati</taxon>
        <taxon>Pseudomonadota</taxon>
        <taxon>Betaproteobacteria</taxon>
        <taxon>Burkholderiales</taxon>
        <taxon>Burkholderiaceae</taxon>
        <taxon>Burkholderia</taxon>
        <taxon>pseudomallei group</taxon>
    </lineage>
</organism>
<dbReference type="EC" id="6.3.2.9" evidence="1"/>
<dbReference type="EMBL" id="CP000570">
    <property type="protein sequence ID" value="ABN85169.1"/>
    <property type="molecule type" value="Genomic_DNA"/>
</dbReference>
<dbReference type="RefSeq" id="WP_011852239.1">
    <property type="nucleotide sequence ID" value="NC_009074.1"/>
</dbReference>
<dbReference type="SMR" id="A3NDW6"/>
<dbReference type="KEGG" id="bpd:BURPS668_3527"/>
<dbReference type="HOGENOM" id="CLU_032540_1_1_4"/>
<dbReference type="UniPathway" id="UPA00219"/>
<dbReference type="GO" id="GO:0005737">
    <property type="term" value="C:cytoplasm"/>
    <property type="evidence" value="ECO:0007669"/>
    <property type="project" value="UniProtKB-SubCell"/>
</dbReference>
<dbReference type="GO" id="GO:0005524">
    <property type="term" value="F:ATP binding"/>
    <property type="evidence" value="ECO:0007669"/>
    <property type="project" value="UniProtKB-UniRule"/>
</dbReference>
<dbReference type="GO" id="GO:0008764">
    <property type="term" value="F:UDP-N-acetylmuramoylalanine-D-glutamate ligase activity"/>
    <property type="evidence" value="ECO:0007669"/>
    <property type="project" value="UniProtKB-UniRule"/>
</dbReference>
<dbReference type="GO" id="GO:0051301">
    <property type="term" value="P:cell division"/>
    <property type="evidence" value="ECO:0007669"/>
    <property type="project" value="UniProtKB-KW"/>
</dbReference>
<dbReference type="GO" id="GO:0071555">
    <property type="term" value="P:cell wall organization"/>
    <property type="evidence" value="ECO:0007669"/>
    <property type="project" value="UniProtKB-KW"/>
</dbReference>
<dbReference type="GO" id="GO:0009252">
    <property type="term" value="P:peptidoglycan biosynthetic process"/>
    <property type="evidence" value="ECO:0007669"/>
    <property type="project" value="UniProtKB-UniRule"/>
</dbReference>
<dbReference type="GO" id="GO:0008360">
    <property type="term" value="P:regulation of cell shape"/>
    <property type="evidence" value="ECO:0007669"/>
    <property type="project" value="UniProtKB-KW"/>
</dbReference>
<dbReference type="Gene3D" id="3.90.190.20">
    <property type="entry name" value="Mur ligase, C-terminal domain"/>
    <property type="match status" value="1"/>
</dbReference>
<dbReference type="Gene3D" id="3.40.1190.10">
    <property type="entry name" value="Mur-like, catalytic domain"/>
    <property type="match status" value="1"/>
</dbReference>
<dbReference type="Gene3D" id="3.40.50.720">
    <property type="entry name" value="NAD(P)-binding Rossmann-like Domain"/>
    <property type="match status" value="1"/>
</dbReference>
<dbReference type="HAMAP" id="MF_00639">
    <property type="entry name" value="MurD"/>
    <property type="match status" value="1"/>
</dbReference>
<dbReference type="InterPro" id="IPR036565">
    <property type="entry name" value="Mur-like_cat_sf"/>
</dbReference>
<dbReference type="InterPro" id="IPR004101">
    <property type="entry name" value="Mur_ligase_C"/>
</dbReference>
<dbReference type="InterPro" id="IPR036615">
    <property type="entry name" value="Mur_ligase_C_dom_sf"/>
</dbReference>
<dbReference type="InterPro" id="IPR013221">
    <property type="entry name" value="Mur_ligase_cen"/>
</dbReference>
<dbReference type="InterPro" id="IPR005762">
    <property type="entry name" value="MurD"/>
</dbReference>
<dbReference type="NCBIfam" id="TIGR01087">
    <property type="entry name" value="murD"/>
    <property type="match status" value="1"/>
</dbReference>
<dbReference type="PANTHER" id="PTHR43692">
    <property type="entry name" value="UDP-N-ACETYLMURAMOYLALANINE--D-GLUTAMATE LIGASE"/>
    <property type="match status" value="1"/>
</dbReference>
<dbReference type="PANTHER" id="PTHR43692:SF1">
    <property type="entry name" value="UDP-N-ACETYLMURAMOYLALANINE--D-GLUTAMATE LIGASE"/>
    <property type="match status" value="1"/>
</dbReference>
<dbReference type="Pfam" id="PF02875">
    <property type="entry name" value="Mur_ligase_C"/>
    <property type="match status" value="1"/>
</dbReference>
<dbReference type="Pfam" id="PF08245">
    <property type="entry name" value="Mur_ligase_M"/>
    <property type="match status" value="1"/>
</dbReference>
<dbReference type="Pfam" id="PF21799">
    <property type="entry name" value="MurD-like_N"/>
    <property type="match status" value="1"/>
</dbReference>
<dbReference type="SUPFAM" id="SSF51984">
    <property type="entry name" value="MurCD N-terminal domain"/>
    <property type="match status" value="1"/>
</dbReference>
<dbReference type="SUPFAM" id="SSF53623">
    <property type="entry name" value="MurD-like peptide ligases, catalytic domain"/>
    <property type="match status" value="1"/>
</dbReference>
<dbReference type="SUPFAM" id="SSF53244">
    <property type="entry name" value="MurD-like peptide ligases, peptide-binding domain"/>
    <property type="match status" value="1"/>
</dbReference>
<accession>A3NDW6</accession>
<reference key="1">
    <citation type="journal article" date="2010" name="Genome Biol. Evol.">
        <title>Continuing evolution of Burkholderia mallei through genome reduction and large-scale rearrangements.</title>
        <authorList>
            <person name="Losada L."/>
            <person name="Ronning C.M."/>
            <person name="DeShazer D."/>
            <person name="Woods D."/>
            <person name="Fedorova N."/>
            <person name="Kim H.S."/>
            <person name="Shabalina S.A."/>
            <person name="Pearson T.R."/>
            <person name="Brinkac L."/>
            <person name="Tan P."/>
            <person name="Nandi T."/>
            <person name="Crabtree J."/>
            <person name="Badger J."/>
            <person name="Beckstrom-Sternberg S."/>
            <person name="Saqib M."/>
            <person name="Schutzer S.E."/>
            <person name="Keim P."/>
            <person name="Nierman W.C."/>
        </authorList>
    </citation>
    <scope>NUCLEOTIDE SEQUENCE [LARGE SCALE GENOMIC DNA]</scope>
    <source>
        <strain>668</strain>
    </source>
</reference>
<protein>
    <recommendedName>
        <fullName evidence="1">UDP-N-acetylmuramoylalanine--D-glutamate ligase</fullName>
        <ecNumber evidence="1">6.3.2.9</ecNumber>
    </recommendedName>
    <alternativeName>
        <fullName evidence="1">D-glutamic acid-adding enzyme</fullName>
    </alternativeName>
    <alternativeName>
        <fullName evidence="1">UDP-N-acetylmuramoyl-L-alanyl-D-glutamate synthetase</fullName>
    </alternativeName>
</protein>
<comment type="function">
    <text evidence="1">Cell wall formation. Catalyzes the addition of glutamate to the nucleotide precursor UDP-N-acetylmuramoyl-L-alanine (UMA).</text>
</comment>
<comment type="catalytic activity">
    <reaction evidence="1">
        <text>UDP-N-acetyl-alpha-D-muramoyl-L-alanine + D-glutamate + ATP = UDP-N-acetyl-alpha-D-muramoyl-L-alanyl-D-glutamate + ADP + phosphate + H(+)</text>
        <dbReference type="Rhea" id="RHEA:16429"/>
        <dbReference type="ChEBI" id="CHEBI:15378"/>
        <dbReference type="ChEBI" id="CHEBI:29986"/>
        <dbReference type="ChEBI" id="CHEBI:30616"/>
        <dbReference type="ChEBI" id="CHEBI:43474"/>
        <dbReference type="ChEBI" id="CHEBI:83898"/>
        <dbReference type="ChEBI" id="CHEBI:83900"/>
        <dbReference type="ChEBI" id="CHEBI:456216"/>
        <dbReference type="EC" id="6.3.2.9"/>
    </reaction>
</comment>
<comment type="pathway">
    <text evidence="1">Cell wall biogenesis; peptidoglycan biosynthesis.</text>
</comment>
<comment type="subcellular location">
    <subcellularLocation>
        <location evidence="1">Cytoplasm</location>
    </subcellularLocation>
</comment>
<comment type="similarity">
    <text evidence="1">Belongs to the MurCDEF family.</text>
</comment>
<sequence length="504" mass="52563">MFGDRQRPMVLVLGLGESGLAIARWCARHGCRLRVADTRETPPNLAALTAAGVDFEFVGGAFSPALVDGGIELVALSPGLSPLAEDLAPLVAAARERGIPVWGELEFFAQALAALGANGYAPKVIAITGTNGKTTTTSLAGLLCERAGKKVAVAGNISPAMLDKLTEAIDAAALPDVWVLELSSFQLDTAHTFAPDAATILNITQDHLDWHGGFAAYAAAKGRVFGPRTVRVLNRDDAEVMRFAPPAAAADAPRAVTFGLNEPAADGDYGLLRENGIAWLVEAIDRDAADAPAAPSRRRKQEAANPPDIALKRLMPADALRIRGLHNAANALAAYALARAIGLPAAPLLHGLREYRGEPHRVEVIATLDGVDYVDDSKGTNVGATVAALDGLAQRAVLIAGGDGKGQDFEPLAAPVARWCRAVMLIGRDAPALREALADTGVPLADHATLEAAVRAASALAQPGDAVLLSPACASLDMFRNYAHRADVFRSAVEDIALEKGTTL</sequence>
<feature type="chain" id="PRO_1000056876" description="UDP-N-acetylmuramoylalanine--D-glutamate ligase">
    <location>
        <begin position="1"/>
        <end position="504"/>
    </location>
</feature>
<feature type="binding site" evidence="1">
    <location>
        <begin position="129"/>
        <end position="135"/>
    </location>
    <ligand>
        <name>ATP</name>
        <dbReference type="ChEBI" id="CHEBI:30616"/>
    </ligand>
</feature>
<name>MURD_BURP6</name>
<evidence type="ECO:0000255" key="1">
    <source>
        <dbReference type="HAMAP-Rule" id="MF_00639"/>
    </source>
</evidence>
<gene>
    <name evidence="1" type="primary">murD</name>
    <name type="ordered locus">BURPS668_3527</name>
</gene>
<proteinExistence type="inferred from homology"/>